<name>Y1889_LISMO</name>
<keyword id="KW-1185">Reference proteome</keyword>
<gene>
    <name type="ordered locus">lmo1889</name>
</gene>
<protein>
    <recommendedName>
        <fullName evidence="1">UPF0398 protein lmo1889</fullName>
    </recommendedName>
</protein>
<dbReference type="EMBL" id="AL591981">
    <property type="protein sequence ID" value="CAC99967.1"/>
    <property type="molecule type" value="Genomic_DNA"/>
</dbReference>
<dbReference type="PIR" id="AI1310">
    <property type="entry name" value="AI1310"/>
</dbReference>
<dbReference type="RefSeq" id="NP_465413.1">
    <property type="nucleotide sequence ID" value="NC_003210.1"/>
</dbReference>
<dbReference type="RefSeq" id="WP_003722999.1">
    <property type="nucleotide sequence ID" value="NZ_CP149495.1"/>
</dbReference>
<dbReference type="SMR" id="Q8Y613"/>
<dbReference type="STRING" id="169963.gene:17594574"/>
<dbReference type="PaxDb" id="169963-lmo1889"/>
<dbReference type="EnsemblBacteria" id="CAC99967">
    <property type="protein sequence ID" value="CAC99967"/>
    <property type="gene ID" value="CAC99967"/>
</dbReference>
<dbReference type="GeneID" id="985803"/>
<dbReference type="KEGG" id="lmo:lmo1889"/>
<dbReference type="PATRIC" id="fig|169963.11.peg.1935"/>
<dbReference type="eggNOG" id="COG4474">
    <property type="taxonomic scope" value="Bacteria"/>
</dbReference>
<dbReference type="HOGENOM" id="CLU_105319_0_0_9"/>
<dbReference type="OrthoDB" id="2301957at2"/>
<dbReference type="PhylomeDB" id="Q8Y613"/>
<dbReference type="BioCyc" id="LMON169963:LMO1889-MONOMER"/>
<dbReference type="Proteomes" id="UP000000817">
    <property type="component" value="Chromosome"/>
</dbReference>
<dbReference type="Gene3D" id="3.40.50.450">
    <property type="match status" value="1"/>
</dbReference>
<dbReference type="HAMAP" id="MF_01575">
    <property type="entry name" value="UPF0398"/>
    <property type="match status" value="1"/>
</dbReference>
<dbReference type="InterPro" id="IPR010697">
    <property type="entry name" value="YspA"/>
</dbReference>
<dbReference type="NCBIfam" id="NF010181">
    <property type="entry name" value="PRK13660.1"/>
    <property type="match status" value="1"/>
</dbReference>
<dbReference type="PANTHER" id="PTHR38440:SF1">
    <property type="entry name" value="UPF0398 PROTEIN SPR0331"/>
    <property type="match status" value="1"/>
</dbReference>
<dbReference type="PANTHER" id="PTHR38440">
    <property type="entry name" value="UPF0398 PROTEIN YPSA"/>
    <property type="match status" value="1"/>
</dbReference>
<dbReference type="Pfam" id="PF06908">
    <property type="entry name" value="YpsA"/>
    <property type="match status" value="1"/>
</dbReference>
<dbReference type="PIRSF" id="PIRSF021290">
    <property type="entry name" value="DUF1273"/>
    <property type="match status" value="1"/>
</dbReference>
<dbReference type="SUPFAM" id="SSF102405">
    <property type="entry name" value="MCP/YpsA-like"/>
    <property type="match status" value="1"/>
</dbReference>
<accession>Q8Y613</accession>
<evidence type="ECO:0000255" key="1">
    <source>
        <dbReference type="HAMAP-Rule" id="MF_01575"/>
    </source>
</evidence>
<proteinExistence type="inferred from homology"/>
<comment type="similarity">
    <text evidence="1">Belongs to the UPF0398 family.</text>
</comment>
<feature type="chain" id="PRO_0000267165" description="UPF0398 protein lmo1889">
    <location>
        <begin position="1"/>
        <end position="181"/>
    </location>
</feature>
<organism>
    <name type="scientific">Listeria monocytogenes serovar 1/2a (strain ATCC BAA-679 / EGD-e)</name>
    <dbReference type="NCBI Taxonomy" id="169963"/>
    <lineage>
        <taxon>Bacteria</taxon>
        <taxon>Bacillati</taxon>
        <taxon>Bacillota</taxon>
        <taxon>Bacilli</taxon>
        <taxon>Bacillales</taxon>
        <taxon>Listeriaceae</taxon>
        <taxon>Listeria</taxon>
    </lineage>
</organism>
<sequence length="181" mass="20733">MKSIAVTGYKNFELGIFKKDADEAVYIKETIKRHLLPLVEDGLEWVIISGQLGIELWAGDVVAELKADYPIKLAILEPFEKQSANWNEANQLWASEVLEKADYHAFITKRPYESPAQFAARDGFIIDNTDGALLVYDLEKEGSPKFFYDRATQAKEQSNYYIDCIDFYALQEVVEDMNQTF</sequence>
<reference key="1">
    <citation type="journal article" date="2001" name="Science">
        <title>Comparative genomics of Listeria species.</title>
        <authorList>
            <person name="Glaser P."/>
            <person name="Frangeul L."/>
            <person name="Buchrieser C."/>
            <person name="Rusniok C."/>
            <person name="Amend A."/>
            <person name="Baquero F."/>
            <person name="Berche P."/>
            <person name="Bloecker H."/>
            <person name="Brandt P."/>
            <person name="Chakraborty T."/>
            <person name="Charbit A."/>
            <person name="Chetouani F."/>
            <person name="Couve E."/>
            <person name="de Daruvar A."/>
            <person name="Dehoux P."/>
            <person name="Domann E."/>
            <person name="Dominguez-Bernal G."/>
            <person name="Duchaud E."/>
            <person name="Durant L."/>
            <person name="Dussurget O."/>
            <person name="Entian K.-D."/>
            <person name="Fsihi H."/>
            <person name="Garcia-del Portillo F."/>
            <person name="Garrido P."/>
            <person name="Gautier L."/>
            <person name="Goebel W."/>
            <person name="Gomez-Lopez N."/>
            <person name="Hain T."/>
            <person name="Hauf J."/>
            <person name="Jackson D."/>
            <person name="Jones L.-M."/>
            <person name="Kaerst U."/>
            <person name="Kreft J."/>
            <person name="Kuhn M."/>
            <person name="Kunst F."/>
            <person name="Kurapkat G."/>
            <person name="Madueno E."/>
            <person name="Maitournam A."/>
            <person name="Mata Vicente J."/>
            <person name="Ng E."/>
            <person name="Nedjari H."/>
            <person name="Nordsiek G."/>
            <person name="Novella S."/>
            <person name="de Pablos B."/>
            <person name="Perez-Diaz J.-C."/>
            <person name="Purcell R."/>
            <person name="Remmel B."/>
            <person name="Rose M."/>
            <person name="Schlueter T."/>
            <person name="Simoes N."/>
            <person name="Tierrez A."/>
            <person name="Vazquez-Boland J.-A."/>
            <person name="Voss H."/>
            <person name="Wehland J."/>
            <person name="Cossart P."/>
        </authorList>
    </citation>
    <scope>NUCLEOTIDE SEQUENCE [LARGE SCALE GENOMIC DNA]</scope>
    <source>
        <strain>ATCC BAA-679 / EGD-e</strain>
    </source>
</reference>